<gene>
    <name evidence="1" type="primary">atpB</name>
    <name type="ordered locus">CAB653</name>
</gene>
<comment type="function">
    <text evidence="1">Produces ATP from ADP in the presence of a proton gradient across the membrane. The V-type beta chain is a regulatory subunit.</text>
</comment>
<comment type="similarity">
    <text evidence="1">Belongs to the ATPase alpha/beta chains family.</text>
</comment>
<reference key="1">
    <citation type="journal article" date="2005" name="Genome Res.">
        <title>The Chlamydophila abortus genome sequence reveals an array of variable proteins that contribute to interspecies variation.</title>
        <authorList>
            <person name="Thomson N.R."/>
            <person name="Yeats C."/>
            <person name="Bell K."/>
            <person name="Holden M.T.G."/>
            <person name="Bentley S.D."/>
            <person name="Livingstone M."/>
            <person name="Cerdeno-Tarraga A.-M."/>
            <person name="Harris B."/>
            <person name="Doggett J."/>
            <person name="Ormond D."/>
            <person name="Mungall K."/>
            <person name="Clarke K."/>
            <person name="Feltwell T."/>
            <person name="Hance Z."/>
            <person name="Sanders M."/>
            <person name="Quail M.A."/>
            <person name="Price C."/>
            <person name="Barrell B.G."/>
            <person name="Parkhill J."/>
            <person name="Longbottom D."/>
        </authorList>
    </citation>
    <scope>NUCLEOTIDE SEQUENCE [LARGE SCALE GENOMIC DNA]</scope>
    <source>
        <strain>DSM 27085 / S26/3</strain>
    </source>
</reference>
<proteinExistence type="inferred from homology"/>
<keyword id="KW-0066">ATP synthesis</keyword>
<keyword id="KW-0375">Hydrogen ion transport</keyword>
<keyword id="KW-0406">Ion transport</keyword>
<keyword id="KW-0813">Transport</keyword>
<feature type="chain" id="PRO_1000059367" description="V-type ATP synthase beta chain">
    <location>
        <begin position="1"/>
        <end position="438"/>
    </location>
</feature>
<evidence type="ECO:0000255" key="1">
    <source>
        <dbReference type="HAMAP-Rule" id="MF_00310"/>
    </source>
</evidence>
<sequence>MQTIYTKITDIKGNLITVEAEGARLGELAEIERVDGRSSYASVLRFDAKKVTLQVFGGTSGLSTGDRVVFLGRSMEVTYGESLIGRRLNGVGKPIDGEGECFGDPIEISTPTFNPVCRVVPRDMVRTNIPMIDVFNCLVKSQKIPIFSSSGEKHNALLMRIAAQTDADIVIIGGMGLTFVDYSFFVEESKRLGFADKSVMFIHKAVDAPVECVLIPDMALACAEKFAVDQNKNVLVLLTDMTAFADALKEIAITMDQIPANRGYPGSLYSDLALRYEKAVDIAQGGSITLISVTTMPGDDITHPVPDNTGFITEGQFDLKNNCIDPFGSLSRLKQLVIGKVTREDHGDLANALIRLYADSRKANERMSMGFKLSNWDKKLLAFAELFETRLMSLEVNIPLEEALDIGWKILAQSFHSEEVGIKEQLINKYWPKSCLHR</sequence>
<dbReference type="EMBL" id="CR848038">
    <property type="protein sequence ID" value="CAH64100.1"/>
    <property type="molecule type" value="Genomic_DNA"/>
</dbReference>
<dbReference type="RefSeq" id="WP_011097236.1">
    <property type="nucleotide sequence ID" value="NC_004552.2"/>
</dbReference>
<dbReference type="SMR" id="Q5L5J1"/>
<dbReference type="KEGG" id="cab:CAB653"/>
<dbReference type="eggNOG" id="COG1156">
    <property type="taxonomic scope" value="Bacteria"/>
</dbReference>
<dbReference type="HOGENOM" id="CLU_022916_2_0_0"/>
<dbReference type="OrthoDB" id="9802718at2"/>
<dbReference type="Proteomes" id="UP000001012">
    <property type="component" value="Chromosome"/>
</dbReference>
<dbReference type="GO" id="GO:0005524">
    <property type="term" value="F:ATP binding"/>
    <property type="evidence" value="ECO:0007669"/>
    <property type="project" value="UniProtKB-UniRule"/>
</dbReference>
<dbReference type="GO" id="GO:0046933">
    <property type="term" value="F:proton-transporting ATP synthase activity, rotational mechanism"/>
    <property type="evidence" value="ECO:0007669"/>
    <property type="project" value="UniProtKB-UniRule"/>
</dbReference>
<dbReference type="GO" id="GO:0042777">
    <property type="term" value="P:proton motive force-driven plasma membrane ATP synthesis"/>
    <property type="evidence" value="ECO:0007669"/>
    <property type="project" value="UniProtKB-UniRule"/>
</dbReference>
<dbReference type="CDD" id="cd18118">
    <property type="entry name" value="ATP-synt_V_A-type_beta_N"/>
    <property type="match status" value="1"/>
</dbReference>
<dbReference type="CDD" id="cd01135">
    <property type="entry name" value="V_A-ATPase_B"/>
    <property type="match status" value="1"/>
</dbReference>
<dbReference type="Gene3D" id="3.40.50.12240">
    <property type="match status" value="1"/>
</dbReference>
<dbReference type="HAMAP" id="MF_00310">
    <property type="entry name" value="ATP_synth_B_arch"/>
    <property type="match status" value="1"/>
</dbReference>
<dbReference type="InterPro" id="IPR055190">
    <property type="entry name" value="ATP-synt_VA_C"/>
</dbReference>
<dbReference type="InterPro" id="IPR004100">
    <property type="entry name" value="ATPase_F1/V1/A1_a/bsu_N"/>
</dbReference>
<dbReference type="InterPro" id="IPR000194">
    <property type="entry name" value="ATPase_F1/V1/A1_a/bsu_nucl-bd"/>
</dbReference>
<dbReference type="InterPro" id="IPR027417">
    <property type="entry name" value="P-loop_NTPase"/>
</dbReference>
<dbReference type="InterPro" id="IPR022879">
    <property type="entry name" value="V-ATPase_su_B/beta"/>
</dbReference>
<dbReference type="NCBIfam" id="NF002555">
    <property type="entry name" value="PRK02118.1"/>
    <property type="match status" value="1"/>
</dbReference>
<dbReference type="NCBIfam" id="NF003235">
    <property type="entry name" value="PRK04196.1"/>
    <property type="match status" value="1"/>
</dbReference>
<dbReference type="PANTHER" id="PTHR43389">
    <property type="entry name" value="V-TYPE PROTON ATPASE SUBUNIT B"/>
    <property type="match status" value="1"/>
</dbReference>
<dbReference type="PANTHER" id="PTHR43389:SF4">
    <property type="entry name" value="V-TYPE PROTON ATPASE SUBUNIT B"/>
    <property type="match status" value="1"/>
</dbReference>
<dbReference type="Pfam" id="PF00006">
    <property type="entry name" value="ATP-synt_ab"/>
    <property type="match status" value="1"/>
</dbReference>
<dbReference type="Pfam" id="PF02874">
    <property type="entry name" value="ATP-synt_ab_N"/>
    <property type="match status" value="1"/>
</dbReference>
<dbReference type="Pfam" id="PF22919">
    <property type="entry name" value="ATP-synt_VA_C"/>
    <property type="match status" value="1"/>
</dbReference>
<dbReference type="SUPFAM" id="SSF52540">
    <property type="entry name" value="P-loop containing nucleoside triphosphate hydrolases"/>
    <property type="match status" value="1"/>
</dbReference>
<organism>
    <name type="scientific">Chlamydia abortus (strain DSM 27085 / S26/3)</name>
    <name type="common">Chlamydophila abortus</name>
    <dbReference type="NCBI Taxonomy" id="218497"/>
    <lineage>
        <taxon>Bacteria</taxon>
        <taxon>Pseudomonadati</taxon>
        <taxon>Chlamydiota</taxon>
        <taxon>Chlamydiia</taxon>
        <taxon>Chlamydiales</taxon>
        <taxon>Chlamydiaceae</taxon>
        <taxon>Chlamydia/Chlamydophila group</taxon>
        <taxon>Chlamydia</taxon>
    </lineage>
</organism>
<protein>
    <recommendedName>
        <fullName evidence="1">V-type ATP synthase beta chain</fullName>
    </recommendedName>
    <alternativeName>
        <fullName evidence="1">V-ATPase subunit B</fullName>
    </alternativeName>
</protein>
<name>VATB_CHLAB</name>
<accession>Q5L5J1</accession>